<feature type="chain" id="PRO_0000205235" description="Isopentenyl-diphosphate Delta-isomerase II">
    <location>
        <begin position="1"/>
        <end position="309"/>
    </location>
</feature>
<feature type="domain" description="Nudix hydrolase" evidence="2">
    <location>
        <begin position="126"/>
        <end position="278"/>
    </location>
</feature>
<feature type="active site" evidence="1">
    <location>
        <position position="163"/>
    </location>
</feature>
<feature type="active site" evidence="1">
    <location>
        <position position="225"/>
    </location>
</feature>
<feature type="binding site" evidence="1">
    <location>
        <position position="112"/>
    </location>
    <ligand>
        <name>substrate</name>
    </ligand>
</feature>
<feature type="binding site" evidence="1">
    <location>
        <position position="116"/>
    </location>
    <ligand>
        <name>Mg(2+)</name>
        <dbReference type="ChEBI" id="CHEBI:18420"/>
    </ligand>
</feature>
<feature type="binding site" evidence="1">
    <location>
        <position position="128"/>
    </location>
    <ligand>
        <name>Mg(2+)</name>
        <dbReference type="ChEBI" id="CHEBI:18420"/>
    </ligand>
</feature>
<feature type="binding site" evidence="1">
    <location>
        <position position="147"/>
    </location>
    <ligand>
        <name>substrate</name>
    </ligand>
</feature>
<feature type="binding site" evidence="1">
    <location>
        <position position="151"/>
    </location>
    <ligand>
        <name>substrate</name>
    </ligand>
</feature>
<feature type="binding site" evidence="1">
    <location>
        <position position="164"/>
    </location>
    <ligand>
        <name>substrate</name>
    </ligand>
</feature>
<feature type="binding site" evidence="1">
    <location>
        <position position="223"/>
    </location>
    <ligand>
        <name>Mg(2+)</name>
        <dbReference type="ChEBI" id="CHEBI:18420"/>
    </ligand>
</feature>
<feature type="binding site" evidence="1">
    <location>
        <position position="225"/>
    </location>
    <ligand>
        <name>Mg(2+)</name>
        <dbReference type="ChEBI" id="CHEBI:18420"/>
    </ligand>
</feature>
<keyword id="KW-0149">Chlorophyll biosynthesis</keyword>
<keyword id="KW-0413">Isomerase</keyword>
<keyword id="KW-0414">Isoprene biosynthesis</keyword>
<keyword id="KW-0460">Magnesium</keyword>
<keyword id="KW-0479">Metal-binding</keyword>
<keyword id="KW-0602">Photosynthesis</keyword>
<proteinExistence type="evidence at transcript level"/>
<accession>O48965</accession>
<protein>
    <recommendedName>
        <fullName>Isopentenyl-diphosphate Delta-isomerase II</fullName>
        <ecNumber>5.3.3.2</ecNumber>
    </recommendedName>
    <alternativeName>
        <fullName>Isopentenyl pyrophosphate isomerase II</fullName>
        <shortName>IPP isomerase II</shortName>
    </alternativeName>
</protein>
<gene>
    <name type="primary">IPI2</name>
</gene>
<name>IDI2_CAMAC</name>
<comment type="function">
    <text evidence="1">Catalyzes the 1,3-allylic rearrangement of the homoallylic substrate isopentenyl (IPP) to its highly electrophilic allylic isomer, dimethylallyl diphosphate (DMAPP).</text>
</comment>
<comment type="catalytic activity">
    <reaction>
        <text>isopentenyl diphosphate = dimethylallyl diphosphate</text>
        <dbReference type="Rhea" id="RHEA:23284"/>
        <dbReference type="ChEBI" id="CHEBI:57623"/>
        <dbReference type="ChEBI" id="CHEBI:128769"/>
        <dbReference type="EC" id="5.3.3.2"/>
    </reaction>
</comment>
<comment type="cofactor">
    <cofactor evidence="1">
        <name>Mg(2+)</name>
        <dbReference type="ChEBI" id="CHEBI:18420"/>
    </cofactor>
    <text evidence="1">Binds 1 Mg(2+) ion per subunit.</text>
</comment>
<comment type="pathway">
    <text>Isoprenoid biosynthesis; dimethylallyl diphosphate biosynthesis; dimethylallyl diphosphate from isopentenyl diphosphate: step 1/1.</text>
</comment>
<comment type="pathway">
    <text>Porphyrin-containing compound metabolism; chlorophyll biosynthesis.</text>
</comment>
<comment type="similarity">
    <text evidence="3">Belongs to the IPP isomerase type 1 family.</text>
</comment>
<organism>
    <name type="scientific">Camptotheca acuminata</name>
    <name type="common">Happy tree</name>
    <dbReference type="NCBI Taxonomy" id="16922"/>
    <lineage>
        <taxon>Eukaryota</taxon>
        <taxon>Viridiplantae</taxon>
        <taxon>Streptophyta</taxon>
        <taxon>Embryophyta</taxon>
        <taxon>Tracheophyta</taxon>
        <taxon>Spermatophyta</taxon>
        <taxon>Magnoliopsida</taxon>
        <taxon>eudicotyledons</taxon>
        <taxon>Gunneridae</taxon>
        <taxon>Pentapetalae</taxon>
        <taxon>asterids</taxon>
        <taxon>Cornales</taxon>
        <taxon>Nyssaceae</taxon>
        <taxon>Camptotheca</taxon>
    </lineage>
</organism>
<dbReference type="EC" id="5.3.3.2"/>
<dbReference type="EMBL" id="AF031080">
    <property type="protein sequence ID" value="AAB94133.1"/>
    <property type="molecule type" value="mRNA"/>
</dbReference>
<dbReference type="SMR" id="O48965"/>
<dbReference type="UniPathway" id="UPA00059">
    <property type="reaction ID" value="UER00104"/>
</dbReference>
<dbReference type="UniPathway" id="UPA00668"/>
<dbReference type="GO" id="GO:0005737">
    <property type="term" value="C:cytoplasm"/>
    <property type="evidence" value="ECO:0007669"/>
    <property type="project" value="TreeGrafter"/>
</dbReference>
<dbReference type="GO" id="GO:0004452">
    <property type="term" value="F:isopentenyl-diphosphate delta-isomerase activity"/>
    <property type="evidence" value="ECO:0007669"/>
    <property type="project" value="UniProtKB-EC"/>
</dbReference>
<dbReference type="GO" id="GO:0046872">
    <property type="term" value="F:metal ion binding"/>
    <property type="evidence" value="ECO:0007669"/>
    <property type="project" value="UniProtKB-KW"/>
</dbReference>
<dbReference type="GO" id="GO:0015995">
    <property type="term" value="P:chlorophyll biosynthetic process"/>
    <property type="evidence" value="ECO:0007669"/>
    <property type="project" value="UniProtKB-UniPathway"/>
</dbReference>
<dbReference type="GO" id="GO:0050992">
    <property type="term" value="P:dimethylallyl diphosphate biosynthetic process"/>
    <property type="evidence" value="ECO:0007669"/>
    <property type="project" value="UniProtKB-UniPathway"/>
</dbReference>
<dbReference type="GO" id="GO:0009240">
    <property type="term" value="P:isopentenyl diphosphate biosynthetic process"/>
    <property type="evidence" value="ECO:0007669"/>
    <property type="project" value="TreeGrafter"/>
</dbReference>
<dbReference type="GO" id="GO:0015979">
    <property type="term" value="P:photosynthesis"/>
    <property type="evidence" value="ECO:0007669"/>
    <property type="project" value="UniProtKB-KW"/>
</dbReference>
<dbReference type="CDD" id="cd02885">
    <property type="entry name" value="NUDIX_IPP_Isomerase"/>
    <property type="match status" value="1"/>
</dbReference>
<dbReference type="FunFam" id="3.90.79.10:FF:000025">
    <property type="entry name" value="isopentenyl-diphosphate Delta-isomerase I"/>
    <property type="match status" value="1"/>
</dbReference>
<dbReference type="Gene3D" id="3.90.79.10">
    <property type="entry name" value="Nucleoside Triphosphate Pyrophosphohydrolase"/>
    <property type="match status" value="1"/>
</dbReference>
<dbReference type="InterPro" id="IPR011876">
    <property type="entry name" value="IsopentenylPP_isomerase_typ1"/>
</dbReference>
<dbReference type="InterPro" id="IPR015797">
    <property type="entry name" value="NUDIX_hydrolase-like_dom_sf"/>
</dbReference>
<dbReference type="InterPro" id="IPR000086">
    <property type="entry name" value="NUDIX_hydrolase_dom"/>
</dbReference>
<dbReference type="NCBIfam" id="TIGR02150">
    <property type="entry name" value="IPP_isom_1"/>
    <property type="match status" value="1"/>
</dbReference>
<dbReference type="PANTHER" id="PTHR10885">
    <property type="entry name" value="ISOPENTENYL-DIPHOSPHATE DELTA-ISOMERASE"/>
    <property type="match status" value="1"/>
</dbReference>
<dbReference type="PANTHER" id="PTHR10885:SF0">
    <property type="entry name" value="ISOPENTENYL-DIPHOSPHATE DELTA-ISOMERASE"/>
    <property type="match status" value="1"/>
</dbReference>
<dbReference type="Pfam" id="PF00293">
    <property type="entry name" value="NUDIX"/>
    <property type="match status" value="1"/>
</dbReference>
<dbReference type="SUPFAM" id="SSF55811">
    <property type="entry name" value="Nudix"/>
    <property type="match status" value="1"/>
</dbReference>
<dbReference type="PROSITE" id="PS51462">
    <property type="entry name" value="NUDIX"/>
    <property type="match status" value="1"/>
</dbReference>
<reference key="1">
    <citation type="submission" date="1997-10" db="EMBL/GenBank/DDBJ databases">
        <title>Isolation and characterization of two genes from Camptotheca acuminata that encode isopentenyl diphosphate isomerase.</title>
        <authorList>
            <person name="Jung K.-H."/>
            <person name="Christensen D.J."/>
            <person name="Scott A.I."/>
        </authorList>
    </citation>
    <scope>NUCLEOTIDE SEQUENCE [MRNA]</scope>
</reference>
<evidence type="ECO:0000250" key="1"/>
<evidence type="ECO:0000255" key="2">
    <source>
        <dbReference type="PROSITE-ProRule" id="PRU00794"/>
    </source>
</evidence>
<evidence type="ECO:0000305" key="3"/>
<sequence length="309" mass="35205">MSAASHIHSVACRLSSSFLASPKLKLHPRLSFFFHSSSFRNHIITRSVFCSSSHLSVRVSSYHSSVAAKATTSAMGDTATDAGMDAVQRRLMFEDECILVDENDHVVGHDTKYNCHLMEKIESDNLLHRAFSVFLFNSKYELLLQQRSATKVTFPLVWTNTCCSHPRYRESELVDENALGVRNAAQRKLLDELGIPAEDVPVDQFIPLGRMLYKAPSDGKWGEHELDYLLFIIRDVNVHPNPDEVADVKYVNQDQLKDLLRKVDAGEEGLKLSPWFRLVVENFLFKWWDHVEKGTLQDATDMKTIHKLT</sequence>